<name>RL6_CLOD6</name>
<protein>
    <recommendedName>
        <fullName evidence="1">Large ribosomal subunit protein uL6</fullName>
    </recommendedName>
    <alternativeName>
        <fullName evidence="2">50S ribosomal protein L6</fullName>
    </alternativeName>
</protein>
<reference key="1">
    <citation type="journal article" date="2006" name="Nat. Genet.">
        <title>The multidrug-resistant human pathogen Clostridium difficile has a highly mobile, mosaic genome.</title>
        <authorList>
            <person name="Sebaihia M."/>
            <person name="Wren B.W."/>
            <person name="Mullany P."/>
            <person name="Fairweather N.F."/>
            <person name="Minton N."/>
            <person name="Stabler R."/>
            <person name="Thomson N.R."/>
            <person name="Roberts A.P."/>
            <person name="Cerdeno-Tarraga A.M."/>
            <person name="Wang H."/>
            <person name="Holden M.T.G."/>
            <person name="Wright A."/>
            <person name="Churcher C."/>
            <person name="Quail M.A."/>
            <person name="Baker S."/>
            <person name="Bason N."/>
            <person name="Brooks K."/>
            <person name="Chillingworth T."/>
            <person name="Cronin A."/>
            <person name="Davis P."/>
            <person name="Dowd L."/>
            <person name="Fraser A."/>
            <person name="Feltwell T."/>
            <person name="Hance Z."/>
            <person name="Holroyd S."/>
            <person name="Jagels K."/>
            <person name="Moule S."/>
            <person name="Mungall K."/>
            <person name="Price C."/>
            <person name="Rabbinowitsch E."/>
            <person name="Sharp S."/>
            <person name="Simmonds M."/>
            <person name="Stevens K."/>
            <person name="Unwin L."/>
            <person name="Whithead S."/>
            <person name="Dupuy B."/>
            <person name="Dougan G."/>
            <person name="Barrell B."/>
            <person name="Parkhill J."/>
        </authorList>
    </citation>
    <scope>NUCLEOTIDE SEQUENCE [LARGE SCALE GENOMIC DNA]</scope>
    <source>
        <strain>630</strain>
    </source>
</reference>
<gene>
    <name evidence="1" type="primary">rplF</name>
    <name type="ordered locus">CD630_00860</name>
</gene>
<feature type="chain" id="PRO_0000265246" description="Large ribosomal subunit protein uL6">
    <location>
        <begin position="1"/>
        <end position="180"/>
    </location>
</feature>
<dbReference type="EMBL" id="AM180355">
    <property type="protein sequence ID" value="CAJ66903.1"/>
    <property type="molecule type" value="Genomic_DNA"/>
</dbReference>
<dbReference type="RefSeq" id="WP_003435668.1">
    <property type="nucleotide sequence ID" value="NZ_JAUPES010000043.1"/>
</dbReference>
<dbReference type="RefSeq" id="YP_001086552.1">
    <property type="nucleotide sequence ID" value="NC_009089.1"/>
</dbReference>
<dbReference type="SMR" id="Q18CH5"/>
<dbReference type="STRING" id="272563.CD630_00860"/>
<dbReference type="EnsemblBacteria" id="CAJ66903">
    <property type="protein sequence ID" value="CAJ66903"/>
    <property type="gene ID" value="CD630_00860"/>
</dbReference>
<dbReference type="GeneID" id="66352586"/>
<dbReference type="KEGG" id="cdf:CD630_00860"/>
<dbReference type="KEGG" id="pdc:CDIF630_00154"/>
<dbReference type="PATRIC" id="fig|272563.120.peg.94"/>
<dbReference type="eggNOG" id="COG0097">
    <property type="taxonomic scope" value="Bacteria"/>
</dbReference>
<dbReference type="OrthoDB" id="9805007at2"/>
<dbReference type="PhylomeDB" id="Q18CH5"/>
<dbReference type="BioCyc" id="PDIF272563:G12WB-142-MONOMER"/>
<dbReference type="Proteomes" id="UP000001978">
    <property type="component" value="Chromosome"/>
</dbReference>
<dbReference type="GO" id="GO:0022625">
    <property type="term" value="C:cytosolic large ribosomal subunit"/>
    <property type="evidence" value="ECO:0007669"/>
    <property type="project" value="TreeGrafter"/>
</dbReference>
<dbReference type="GO" id="GO:0019843">
    <property type="term" value="F:rRNA binding"/>
    <property type="evidence" value="ECO:0007669"/>
    <property type="project" value="UniProtKB-UniRule"/>
</dbReference>
<dbReference type="GO" id="GO:0003735">
    <property type="term" value="F:structural constituent of ribosome"/>
    <property type="evidence" value="ECO:0007669"/>
    <property type="project" value="InterPro"/>
</dbReference>
<dbReference type="GO" id="GO:0002181">
    <property type="term" value="P:cytoplasmic translation"/>
    <property type="evidence" value="ECO:0007669"/>
    <property type="project" value="TreeGrafter"/>
</dbReference>
<dbReference type="FunFam" id="3.90.930.12:FF:000001">
    <property type="entry name" value="50S ribosomal protein L6"/>
    <property type="match status" value="1"/>
</dbReference>
<dbReference type="FunFam" id="3.90.930.12:FF:000002">
    <property type="entry name" value="50S ribosomal protein L6"/>
    <property type="match status" value="1"/>
</dbReference>
<dbReference type="Gene3D" id="3.90.930.12">
    <property type="entry name" value="Ribosomal protein L6, alpha-beta domain"/>
    <property type="match status" value="2"/>
</dbReference>
<dbReference type="HAMAP" id="MF_01365_B">
    <property type="entry name" value="Ribosomal_uL6_B"/>
    <property type="match status" value="1"/>
</dbReference>
<dbReference type="InterPro" id="IPR000702">
    <property type="entry name" value="Ribosomal_uL6-like"/>
</dbReference>
<dbReference type="InterPro" id="IPR036789">
    <property type="entry name" value="Ribosomal_uL6-like_a/b-dom_sf"/>
</dbReference>
<dbReference type="InterPro" id="IPR020040">
    <property type="entry name" value="Ribosomal_uL6_a/b-dom"/>
</dbReference>
<dbReference type="InterPro" id="IPR019906">
    <property type="entry name" value="Ribosomal_uL6_bac-type"/>
</dbReference>
<dbReference type="InterPro" id="IPR002358">
    <property type="entry name" value="Ribosomal_uL6_CS"/>
</dbReference>
<dbReference type="NCBIfam" id="TIGR03654">
    <property type="entry name" value="L6_bact"/>
    <property type="match status" value="1"/>
</dbReference>
<dbReference type="PANTHER" id="PTHR11655">
    <property type="entry name" value="60S/50S RIBOSOMAL PROTEIN L6/L9"/>
    <property type="match status" value="1"/>
</dbReference>
<dbReference type="PANTHER" id="PTHR11655:SF14">
    <property type="entry name" value="LARGE RIBOSOMAL SUBUNIT PROTEIN UL6M"/>
    <property type="match status" value="1"/>
</dbReference>
<dbReference type="Pfam" id="PF00347">
    <property type="entry name" value="Ribosomal_L6"/>
    <property type="match status" value="2"/>
</dbReference>
<dbReference type="PIRSF" id="PIRSF002162">
    <property type="entry name" value="Ribosomal_L6"/>
    <property type="match status" value="1"/>
</dbReference>
<dbReference type="PRINTS" id="PR00059">
    <property type="entry name" value="RIBOSOMALL6"/>
</dbReference>
<dbReference type="SUPFAM" id="SSF56053">
    <property type="entry name" value="Ribosomal protein L6"/>
    <property type="match status" value="2"/>
</dbReference>
<dbReference type="PROSITE" id="PS00525">
    <property type="entry name" value="RIBOSOMAL_L6_1"/>
    <property type="match status" value="1"/>
</dbReference>
<evidence type="ECO:0000255" key="1">
    <source>
        <dbReference type="HAMAP-Rule" id="MF_01365"/>
    </source>
</evidence>
<evidence type="ECO:0000305" key="2"/>
<keyword id="KW-1185">Reference proteome</keyword>
<keyword id="KW-0687">Ribonucleoprotein</keyword>
<keyword id="KW-0689">Ribosomal protein</keyword>
<keyword id="KW-0694">RNA-binding</keyword>
<keyword id="KW-0699">rRNA-binding</keyword>
<sequence length="180" mass="19966">MSRIGVKPIIIPAGVEVTIAEGNLVTVKGPKGTLTKQLSAELNIKKEENTIMVERPTDNKKHRSLHGLTRTLLDNMVVGVNTGFEKKLELKGVGYRAQKQGKKLVMNLGFSHPVEMEDPEGITVEAPNQTELIVKGIDKQLVGNYAAKIRAWRKPEPYKGKGIKYVDEVIRRKEGKTGKK</sequence>
<accession>Q18CH5</accession>
<comment type="function">
    <text evidence="1">This protein binds to the 23S rRNA, and is important in its secondary structure. It is located near the subunit interface in the base of the L7/L12 stalk, and near the tRNA binding site of the peptidyltransferase center.</text>
</comment>
<comment type="subunit">
    <text evidence="1">Part of the 50S ribosomal subunit.</text>
</comment>
<comment type="similarity">
    <text evidence="1">Belongs to the universal ribosomal protein uL6 family.</text>
</comment>
<proteinExistence type="inferred from homology"/>
<organism>
    <name type="scientific">Clostridioides difficile (strain 630)</name>
    <name type="common">Peptoclostridium difficile</name>
    <dbReference type="NCBI Taxonomy" id="272563"/>
    <lineage>
        <taxon>Bacteria</taxon>
        <taxon>Bacillati</taxon>
        <taxon>Bacillota</taxon>
        <taxon>Clostridia</taxon>
        <taxon>Peptostreptococcales</taxon>
        <taxon>Peptostreptococcaceae</taxon>
        <taxon>Clostridioides</taxon>
    </lineage>
</organism>